<geneLocation type="chloroplast"/>
<name>NU4C_CHLAT</name>
<keyword id="KW-0150">Chloroplast</keyword>
<keyword id="KW-0472">Membrane</keyword>
<keyword id="KW-0520">NAD</keyword>
<keyword id="KW-0521">NADP</keyword>
<keyword id="KW-0934">Plastid</keyword>
<keyword id="KW-0618">Plastoquinone</keyword>
<keyword id="KW-0874">Quinone</keyword>
<keyword id="KW-0793">Thylakoid</keyword>
<keyword id="KW-1278">Translocase</keyword>
<keyword id="KW-0812">Transmembrane</keyword>
<keyword id="KW-1133">Transmembrane helix</keyword>
<protein>
    <recommendedName>
        <fullName evidence="1">NAD(P)H-quinone oxidoreductase chain 4, chloroplastic</fullName>
        <ecNumber evidence="1">7.1.1.-</ecNumber>
    </recommendedName>
    <alternativeName>
        <fullName evidence="1">NAD(P)H dehydrogenase, chain 4</fullName>
    </alternativeName>
    <alternativeName>
        <fullName evidence="1">NADH-plastoquinone oxidoreductase chain 4</fullName>
    </alternativeName>
</protein>
<reference key="1">
    <citation type="journal article" date="2007" name="BMC Biol.">
        <title>A clade uniting the green algae Mesostigma viride and Chlorokybus atmophyticus represents the deepest branch of the Streptophyta in chloroplast genome-based phylogenies.</title>
        <authorList>
            <person name="Lemieux C."/>
            <person name="Otis C."/>
            <person name="Turmel M."/>
        </authorList>
    </citation>
    <scope>NUCLEOTIDE SEQUENCE [LARGE SCALE GENOMIC DNA]</scope>
    <source>
        <strain>SAG 48.80</strain>
    </source>
</reference>
<evidence type="ECO:0000255" key="1">
    <source>
        <dbReference type="HAMAP-Rule" id="MF_00491"/>
    </source>
</evidence>
<accession>Q19V61</accession>
<comment type="catalytic activity">
    <reaction evidence="1">
        <text>a plastoquinone + NADH + (n+1) H(+)(in) = a plastoquinol + NAD(+) + n H(+)(out)</text>
        <dbReference type="Rhea" id="RHEA:42608"/>
        <dbReference type="Rhea" id="RHEA-COMP:9561"/>
        <dbReference type="Rhea" id="RHEA-COMP:9562"/>
        <dbReference type="ChEBI" id="CHEBI:15378"/>
        <dbReference type="ChEBI" id="CHEBI:17757"/>
        <dbReference type="ChEBI" id="CHEBI:57540"/>
        <dbReference type="ChEBI" id="CHEBI:57945"/>
        <dbReference type="ChEBI" id="CHEBI:62192"/>
    </reaction>
</comment>
<comment type="catalytic activity">
    <reaction evidence="1">
        <text>a plastoquinone + NADPH + (n+1) H(+)(in) = a plastoquinol + NADP(+) + n H(+)(out)</text>
        <dbReference type="Rhea" id="RHEA:42612"/>
        <dbReference type="Rhea" id="RHEA-COMP:9561"/>
        <dbReference type="Rhea" id="RHEA-COMP:9562"/>
        <dbReference type="ChEBI" id="CHEBI:15378"/>
        <dbReference type="ChEBI" id="CHEBI:17757"/>
        <dbReference type="ChEBI" id="CHEBI:57783"/>
        <dbReference type="ChEBI" id="CHEBI:58349"/>
        <dbReference type="ChEBI" id="CHEBI:62192"/>
    </reaction>
</comment>
<comment type="subcellular location">
    <subcellularLocation>
        <location evidence="1">Plastid</location>
        <location evidence="1">Chloroplast thylakoid membrane</location>
        <topology evidence="1">Multi-pass membrane protein</topology>
    </subcellularLocation>
</comment>
<comment type="similarity">
    <text evidence="1">Belongs to the complex I subunit 4 family.</text>
</comment>
<proteinExistence type="inferred from homology"/>
<feature type="chain" id="PRO_0000343279" description="NAD(P)H-quinone oxidoreductase chain 4, chloroplastic">
    <location>
        <begin position="1"/>
        <end position="512"/>
    </location>
</feature>
<feature type="transmembrane region" description="Helical" evidence="1">
    <location>
        <begin position="4"/>
        <end position="24"/>
    </location>
</feature>
<feature type="transmembrane region" description="Helical" evidence="1">
    <location>
        <begin position="34"/>
        <end position="54"/>
    </location>
</feature>
<feature type="transmembrane region" description="Helical" evidence="1">
    <location>
        <begin position="87"/>
        <end position="107"/>
    </location>
</feature>
<feature type="transmembrane region" description="Helical" evidence="1">
    <location>
        <begin position="111"/>
        <end position="131"/>
    </location>
</feature>
<feature type="transmembrane region" description="Helical" evidence="1">
    <location>
        <begin position="134"/>
        <end position="154"/>
    </location>
</feature>
<feature type="transmembrane region" description="Helical" evidence="1">
    <location>
        <begin position="167"/>
        <end position="187"/>
    </location>
</feature>
<feature type="transmembrane region" description="Helical" evidence="1">
    <location>
        <begin position="210"/>
        <end position="230"/>
    </location>
</feature>
<feature type="transmembrane region" description="Helical" evidence="1">
    <location>
        <begin position="241"/>
        <end position="261"/>
    </location>
</feature>
<feature type="transmembrane region" description="Helical" evidence="1">
    <location>
        <begin position="273"/>
        <end position="293"/>
    </location>
</feature>
<feature type="transmembrane region" description="Helical" evidence="1">
    <location>
        <begin position="312"/>
        <end position="332"/>
    </location>
</feature>
<feature type="transmembrane region" description="Helical" evidence="1">
    <location>
        <begin position="333"/>
        <end position="353"/>
    </location>
</feature>
<feature type="transmembrane region" description="Helical" evidence="1">
    <location>
        <begin position="373"/>
        <end position="395"/>
    </location>
</feature>
<feature type="transmembrane region" description="Helical" evidence="1">
    <location>
        <begin position="416"/>
        <end position="436"/>
    </location>
</feature>
<feature type="transmembrane region" description="Helical" evidence="1">
    <location>
        <begin position="462"/>
        <end position="482"/>
    </location>
</feature>
<gene>
    <name evidence="1" type="primary">ndhD</name>
</gene>
<dbReference type="EC" id="7.1.1.-" evidence="1"/>
<dbReference type="EMBL" id="DQ422812">
    <property type="protein sequence ID" value="ABD62192.2"/>
    <property type="molecule type" value="Genomic_DNA"/>
</dbReference>
<dbReference type="RefSeq" id="YP_001019158.1">
    <property type="nucleotide sequence ID" value="NC_008822.1"/>
</dbReference>
<dbReference type="SMR" id="Q19V61"/>
<dbReference type="GeneID" id="4783324"/>
<dbReference type="GO" id="GO:0009535">
    <property type="term" value="C:chloroplast thylakoid membrane"/>
    <property type="evidence" value="ECO:0007669"/>
    <property type="project" value="UniProtKB-SubCell"/>
</dbReference>
<dbReference type="GO" id="GO:0008137">
    <property type="term" value="F:NADH dehydrogenase (ubiquinone) activity"/>
    <property type="evidence" value="ECO:0007669"/>
    <property type="project" value="InterPro"/>
</dbReference>
<dbReference type="GO" id="GO:0048039">
    <property type="term" value="F:ubiquinone binding"/>
    <property type="evidence" value="ECO:0007669"/>
    <property type="project" value="TreeGrafter"/>
</dbReference>
<dbReference type="GO" id="GO:0042773">
    <property type="term" value="P:ATP synthesis coupled electron transport"/>
    <property type="evidence" value="ECO:0007669"/>
    <property type="project" value="InterPro"/>
</dbReference>
<dbReference type="GO" id="GO:0015990">
    <property type="term" value="P:electron transport coupled proton transport"/>
    <property type="evidence" value="ECO:0007669"/>
    <property type="project" value="TreeGrafter"/>
</dbReference>
<dbReference type="HAMAP" id="MF_00491">
    <property type="entry name" value="NDH1_NuoM"/>
    <property type="match status" value="1"/>
</dbReference>
<dbReference type="InterPro" id="IPR022997">
    <property type="entry name" value="NADH_Q_OxRdtase_chain4"/>
</dbReference>
<dbReference type="InterPro" id="IPR010227">
    <property type="entry name" value="NADH_Q_OxRdtase_chainM/4"/>
</dbReference>
<dbReference type="InterPro" id="IPR003918">
    <property type="entry name" value="NADH_UbQ_OxRdtase"/>
</dbReference>
<dbReference type="InterPro" id="IPR001750">
    <property type="entry name" value="ND/Mrp_TM"/>
</dbReference>
<dbReference type="NCBIfam" id="TIGR01972">
    <property type="entry name" value="NDH_I_M"/>
    <property type="match status" value="1"/>
</dbReference>
<dbReference type="NCBIfam" id="NF002713">
    <property type="entry name" value="PRK02546.1"/>
    <property type="match status" value="1"/>
</dbReference>
<dbReference type="NCBIfam" id="NF009212">
    <property type="entry name" value="PRK12561.1"/>
    <property type="match status" value="1"/>
</dbReference>
<dbReference type="PANTHER" id="PTHR43507:SF21">
    <property type="entry name" value="NAD(P)H-QUINONE OXIDOREDUCTASE CHAIN 4, CHLOROPLASTIC"/>
    <property type="match status" value="1"/>
</dbReference>
<dbReference type="PANTHER" id="PTHR43507">
    <property type="entry name" value="NADH-UBIQUINONE OXIDOREDUCTASE CHAIN 4"/>
    <property type="match status" value="1"/>
</dbReference>
<dbReference type="Pfam" id="PF00361">
    <property type="entry name" value="Proton_antipo_M"/>
    <property type="match status" value="1"/>
</dbReference>
<dbReference type="PRINTS" id="PR01437">
    <property type="entry name" value="NUOXDRDTASE4"/>
</dbReference>
<organism>
    <name type="scientific">Chlorokybus atmophyticus</name>
    <name type="common">Soil alga</name>
    <dbReference type="NCBI Taxonomy" id="3144"/>
    <lineage>
        <taxon>Eukaryota</taxon>
        <taxon>Viridiplantae</taxon>
        <taxon>Streptophyta</taxon>
        <taxon>Chlorokybophyceae</taxon>
        <taxon>Chlorokybales</taxon>
        <taxon>Chlorokybaceae</taxon>
        <taxon>Chlorokybus</taxon>
    </lineage>
</organism>
<sequence length="512" mass="57187">MMNLPWLTIIVLFPILAGLLIPFIPDEKGKTIRWYALGVGILDFLLITYIFGYHYNFKDPSLQLVEDYSWVPLLRFHWCLGVDGLSMPLVLLTGFVTTLAILGAWPVKRNAKLFYFLMLAMYSGQIGVFVSQDLLLFFFMWELELIPVYLLLLVWGGKKRLYAATKFILYTAIGSIFILLAGLTMAFYGDIVTFDMRALKLKEYPLNLEILLYIGFLIAYAVKLPAFPLHTWLPDTHGEAHYSTCMLLAGILLKMGGYALIRINMDMLPNAHLIFAPFLIIIGVINIIYAALTSFAQRNMKRKIAYSSVSHMGFVLIGIGSLTNLGLSGAVLQMISHGLIGASLFFLAGTTYDRTRTLILEDMGGVAKKMPKTFAMFTTCSLASLALPGMSGFVAELMVFLGFATSASYSFEFKAIITFLEGIGIILTPIYLLSMLRQAFYGSESFTLLNKRKLIDAGPREIFVITCLVLPILGIGIYPKMATQIYNSKTETVVQHLQQVQSTFEKTSTLSL</sequence>